<accession>P02322</accession>
<dbReference type="PIR" id="A91656">
    <property type="entry name" value="TYTUZ1"/>
</dbReference>
<dbReference type="PIR" id="A91657">
    <property type="entry name" value="A91657"/>
</dbReference>
<dbReference type="IntAct" id="P02322">
    <property type="interactions" value="1"/>
</dbReference>
<dbReference type="MINT" id="P02322"/>
<dbReference type="iPTMnet" id="P02322"/>
<dbReference type="GO" id="GO:0000786">
    <property type="term" value="C:nucleosome"/>
    <property type="evidence" value="ECO:0007669"/>
    <property type="project" value="UniProtKB-KW"/>
</dbReference>
<dbReference type="GO" id="GO:0005634">
    <property type="term" value="C:nucleus"/>
    <property type="evidence" value="ECO:0007669"/>
    <property type="project" value="UniProtKB-SubCell"/>
</dbReference>
<dbReference type="GO" id="GO:0003677">
    <property type="term" value="F:DNA binding"/>
    <property type="evidence" value="ECO:0007669"/>
    <property type="project" value="UniProtKB-KW"/>
</dbReference>
<dbReference type="GO" id="GO:0030154">
    <property type="term" value="P:cell differentiation"/>
    <property type="evidence" value="ECO:0007669"/>
    <property type="project" value="UniProtKB-KW"/>
</dbReference>
<dbReference type="GO" id="GO:0030261">
    <property type="term" value="P:chromosome condensation"/>
    <property type="evidence" value="ECO:0007669"/>
    <property type="project" value="UniProtKB-KW"/>
</dbReference>
<dbReference type="GO" id="GO:0007283">
    <property type="term" value="P:spermatogenesis"/>
    <property type="evidence" value="ECO:0007669"/>
    <property type="project" value="UniProtKB-KW"/>
</dbReference>
<proteinExistence type="evidence at protein level"/>
<name>PRTZ_THUTH</name>
<comment type="function">
    <text>Protamines substitute for histones in the chromatin of sperm during the haploid phase of spermatogenesis. They compact sperm DNA into a highly condensed, stable and inactive complex.</text>
</comment>
<comment type="subcellular location">
    <subcellularLocation>
        <location>Nucleus</location>
    </subcellularLocation>
    <subcellularLocation>
        <location>Chromosome</location>
    </subcellularLocation>
</comment>
<comment type="tissue specificity">
    <text>Testis.</text>
</comment>
<comment type="miscellaneous">
    <text>The protamine-Z1 sequence is shown.</text>
</comment>
<keyword id="KW-0158">Chromosome</keyword>
<keyword id="KW-0217">Developmental protein</keyword>
<keyword id="KW-0221">Differentiation</keyword>
<keyword id="KW-0903">Direct protein sequencing</keyword>
<keyword id="KW-0226">DNA condensation</keyword>
<keyword id="KW-0238">DNA-binding</keyword>
<keyword id="KW-0544">Nucleosome core</keyword>
<keyword id="KW-0539">Nucleus</keyword>
<keyword id="KW-0744">Spermatogenesis</keyword>
<protein>
    <recommendedName>
        <fullName>Protamine-Z1/Z2</fullName>
    </recommendedName>
    <alternativeName>
        <fullName>Thynnin-Z1/Z2</fullName>
    </alternativeName>
</protein>
<evidence type="ECO:0000256" key="1">
    <source>
        <dbReference type="SAM" id="MobiDB-lite"/>
    </source>
</evidence>
<feature type="peptide" id="PRO_0000044853" description="Protamine-Z1/Z2">
    <location>
        <begin position="1"/>
        <end position="34"/>
    </location>
</feature>
<feature type="region of interest" description="Disordered" evidence="1">
    <location>
        <begin position="1"/>
        <end position="34"/>
    </location>
</feature>
<feature type="sequence variant" description="In protamine-Z2.">
    <original>V</original>
    <variation>A</variation>
    <location>
        <position position="22"/>
    </location>
</feature>
<organism>
    <name type="scientific">Thunnus thynnus</name>
    <name type="common">Atlantic bluefin tuna</name>
    <name type="synonym">Scomber thynnus</name>
    <dbReference type="NCBI Taxonomy" id="8237"/>
    <lineage>
        <taxon>Eukaryota</taxon>
        <taxon>Metazoa</taxon>
        <taxon>Chordata</taxon>
        <taxon>Craniata</taxon>
        <taxon>Vertebrata</taxon>
        <taxon>Euteleostomi</taxon>
        <taxon>Actinopterygii</taxon>
        <taxon>Neopterygii</taxon>
        <taxon>Teleostei</taxon>
        <taxon>Neoteleostei</taxon>
        <taxon>Acanthomorphata</taxon>
        <taxon>Pelagiaria</taxon>
        <taxon>Scombriformes</taxon>
        <taxon>Scombridae</taxon>
        <taxon>Thunnus</taxon>
    </lineage>
</organism>
<reference key="1">
    <citation type="journal article" date="1973" name="Hoppe-Seyler's Z. Physiol. Chem.">
        <title>Thynnin, the protamine of the tuna fish: amino acid sequence of thynnin Z1. XIII. Communication on the structure of protamines from the studies of E. Waldschmidt-Leitz and coworkers.</title>
        <authorList>
            <person name="Bretzel G."/>
        </authorList>
    </citation>
    <scope>PROTEIN SEQUENCE (Z1)</scope>
</reference>
<reference key="2">
    <citation type="journal article" date="1973" name="Hoppe-Seyler's Z. Physiol. Chem.">
        <title>Thynnin, the protamine of the tuna fish: the amino acid sequence of thynnin Z2. XIV. Communication on the structure of the protamines described by E. Waldschmidt-Leitz et al.</title>
        <authorList>
            <person name="Bretzel G."/>
        </authorList>
    </citation>
    <scope>PROTEIN SEQUENCE (Z2)</scope>
</reference>
<sequence length="34" mass="4641">PRRRRRSSRPVRRRRRYRRSTVARRRRRVVRRRR</sequence>